<protein>
    <recommendedName>
        <fullName>Lanosterol 14-alpha demethylase</fullName>
        <ecNumber>1.14.14.154</ecNumber>
    </recommendedName>
    <alternativeName>
        <fullName>CYPLI</fullName>
    </alternativeName>
    <alternativeName>
        <fullName>Cytochrome P450 51</fullName>
    </alternativeName>
    <alternativeName>
        <fullName>Cytochrome P450-14DM</fullName>
    </alternativeName>
    <alternativeName>
        <fullName>Cytochrome P450-LIA1</fullName>
    </alternativeName>
    <alternativeName>
        <fullName>Sterol 14-alpha demethylase</fullName>
    </alternativeName>
</protein>
<proteinExistence type="inferred from homology"/>
<comment type="function">
    <text evidence="2 3 4">Sterol 14alpha-demethylase that plays a critical role in the third module of ergosterol biosynthesis pathway, being ergosterol the major sterol component in fungal membranes that participates in a variety of functions (By similarity). The third module or late pathway involves the ergosterol synthesis itself through consecutive reactions that mainly occur in the endoplasmic reticulum (ER) membrane (By similarity). In filamentous fungi, during the initial step of this module, lanosterol (lanosta-8,24-dien-3beta-ol) can be metabolized to eburicol (By similarity). Sterol 14alpha-demethylase catalyzes the three-step oxidative removal of the 14alpha-methyl group (C-32) of both these sterols in the form of formate, and converts eburicol and lanosterol to 14-demethyleburicol (4,4,24-trimethylergosta-8,14,24(28)-trienol) and 4,4-dimethyl-5alpha-cholesta-8,14,24-trien-3beta-ol, respectively, which are further metabolized by other enzymes in the pathway to ergosterol (By similarity). Can also use substrates not intrinsic to fungi, such as 24,25-dihydrolanosterol (DHL), producing 4,4-dimethyl-8,14-cholestadien-3-beta-ol, but at lower rates than the endogenous substrates (By similarity).</text>
</comment>
<comment type="catalytic activity">
    <reaction evidence="3">
        <text>a 14alpha-methyl steroid + 3 reduced [NADPH--hemoprotein reductase] + 3 O2 = a Delta(14) steroid + formate + 3 oxidized [NADPH--hemoprotein reductase] + 4 H2O + 4 H(+)</text>
        <dbReference type="Rhea" id="RHEA:54028"/>
        <dbReference type="Rhea" id="RHEA-COMP:11964"/>
        <dbReference type="Rhea" id="RHEA-COMP:11965"/>
        <dbReference type="ChEBI" id="CHEBI:15377"/>
        <dbReference type="ChEBI" id="CHEBI:15378"/>
        <dbReference type="ChEBI" id="CHEBI:15379"/>
        <dbReference type="ChEBI" id="CHEBI:15740"/>
        <dbReference type="ChEBI" id="CHEBI:57618"/>
        <dbReference type="ChEBI" id="CHEBI:58210"/>
        <dbReference type="ChEBI" id="CHEBI:138029"/>
        <dbReference type="ChEBI" id="CHEBI:138031"/>
        <dbReference type="EC" id="1.14.14.154"/>
    </reaction>
    <physiologicalReaction direction="left-to-right" evidence="3">
        <dbReference type="Rhea" id="RHEA:54029"/>
    </physiologicalReaction>
</comment>
<comment type="catalytic activity">
    <reaction evidence="3">
        <text>a 14alpha-methyl steroid + reduced [NADPH--hemoprotein reductase] + O2 = a 14alpha-hydroxymethyl steroid + oxidized [NADPH--hemoprotein reductase] + H2O + H(+)</text>
        <dbReference type="Rhea" id="RHEA:68060"/>
        <dbReference type="Rhea" id="RHEA-COMP:11964"/>
        <dbReference type="Rhea" id="RHEA-COMP:11965"/>
        <dbReference type="ChEBI" id="CHEBI:15377"/>
        <dbReference type="ChEBI" id="CHEBI:15378"/>
        <dbReference type="ChEBI" id="CHEBI:15379"/>
        <dbReference type="ChEBI" id="CHEBI:57618"/>
        <dbReference type="ChEBI" id="CHEBI:58210"/>
        <dbReference type="ChEBI" id="CHEBI:138029"/>
        <dbReference type="ChEBI" id="CHEBI:176901"/>
    </reaction>
    <physiologicalReaction direction="left-to-right" evidence="3">
        <dbReference type="Rhea" id="RHEA:68061"/>
    </physiologicalReaction>
</comment>
<comment type="catalytic activity">
    <reaction evidence="3">
        <text>a 14alpha-hydroxymethyl steroid + reduced [NADPH--hemoprotein reductase] + O2 = a 14alpha-formyl steroid + oxidized [NADPH--hemoprotein reductase] + 2 H2O + H(+)</text>
        <dbReference type="Rhea" id="RHEA:68064"/>
        <dbReference type="Rhea" id="RHEA-COMP:11964"/>
        <dbReference type="Rhea" id="RHEA-COMP:11965"/>
        <dbReference type="ChEBI" id="CHEBI:15377"/>
        <dbReference type="ChEBI" id="CHEBI:15378"/>
        <dbReference type="ChEBI" id="CHEBI:15379"/>
        <dbReference type="ChEBI" id="CHEBI:57618"/>
        <dbReference type="ChEBI" id="CHEBI:58210"/>
        <dbReference type="ChEBI" id="CHEBI:176901"/>
        <dbReference type="ChEBI" id="CHEBI:176902"/>
    </reaction>
    <physiologicalReaction direction="left-to-right" evidence="3">
        <dbReference type="Rhea" id="RHEA:68065"/>
    </physiologicalReaction>
</comment>
<comment type="catalytic activity">
    <reaction evidence="3">
        <text>a 14alpha-formyl steroid + reduced [NADPH--hemoprotein reductase] + O2 = a Delta(14) steroid + formate + oxidized [NADPH--hemoprotein reductase] + H2O + 2 H(+)</text>
        <dbReference type="Rhea" id="RHEA:68068"/>
        <dbReference type="Rhea" id="RHEA-COMP:11964"/>
        <dbReference type="Rhea" id="RHEA-COMP:11965"/>
        <dbReference type="ChEBI" id="CHEBI:15377"/>
        <dbReference type="ChEBI" id="CHEBI:15378"/>
        <dbReference type="ChEBI" id="CHEBI:15379"/>
        <dbReference type="ChEBI" id="CHEBI:15740"/>
        <dbReference type="ChEBI" id="CHEBI:57618"/>
        <dbReference type="ChEBI" id="CHEBI:58210"/>
        <dbReference type="ChEBI" id="CHEBI:138031"/>
        <dbReference type="ChEBI" id="CHEBI:176902"/>
    </reaction>
    <physiologicalReaction direction="left-to-right" evidence="3">
        <dbReference type="Rhea" id="RHEA:68069"/>
    </physiologicalReaction>
</comment>
<comment type="catalytic activity">
    <reaction evidence="3">
        <text>lanosterol + 3 reduced [NADPH--hemoprotein reductase] + 3 O2 = 4,4-dimethyl-5alpha-cholesta-8,14,24-trien-3beta-ol + formate + 3 oxidized [NADPH--hemoprotein reductase] + 4 H2O + 4 H(+)</text>
        <dbReference type="Rhea" id="RHEA:25286"/>
        <dbReference type="Rhea" id="RHEA-COMP:11964"/>
        <dbReference type="Rhea" id="RHEA-COMP:11965"/>
        <dbReference type="ChEBI" id="CHEBI:15377"/>
        <dbReference type="ChEBI" id="CHEBI:15378"/>
        <dbReference type="ChEBI" id="CHEBI:15379"/>
        <dbReference type="ChEBI" id="CHEBI:15740"/>
        <dbReference type="ChEBI" id="CHEBI:16521"/>
        <dbReference type="ChEBI" id="CHEBI:17813"/>
        <dbReference type="ChEBI" id="CHEBI:57618"/>
        <dbReference type="ChEBI" id="CHEBI:58210"/>
        <dbReference type="EC" id="1.14.14.154"/>
    </reaction>
    <physiologicalReaction direction="left-to-right" evidence="3">
        <dbReference type="Rhea" id="RHEA:25287"/>
    </physiologicalReaction>
</comment>
<comment type="catalytic activity">
    <reaction evidence="3">
        <text>lanosterol + reduced [NADPH--hemoprotein reductase] + O2 = 32-hydroxylanosterol + oxidized [NADPH--hemoprotein reductase] + H2O + H(+)</text>
        <dbReference type="Rhea" id="RHEA:75103"/>
        <dbReference type="Rhea" id="RHEA-COMP:11964"/>
        <dbReference type="Rhea" id="RHEA-COMP:11965"/>
        <dbReference type="ChEBI" id="CHEBI:15377"/>
        <dbReference type="ChEBI" id="CHEBI:15378"/>
        <dbReference type="ChEBI" id="CHEBI:15379"/>
        <dbReference type="ChEBI" id="CHEBI:16521"/>
        <dbReference type="ChEBI" id="CHEBI:57618"/>
        <dbReference type="ChEBI" id="CHEBI:58210"/>
        <dbReference type="ChEBI" id="CHEBI:166806"/>
    </reaction>
    <physiologicalReaction direction="left-to-right" evidence="3">
        <dbReference type="Rhea" id="RHEA:75104"/>
    </physiologicalReaction>
</comment>
<comment type="catalytic activity">
    <reaction evidence="3">
        <text>32-hydroxylanosterol + reduced [NADPH--hemoprotein reductase] + O2 = 32-oxolanosterol + oxidized [NADPH--hemoprotein reductase] + 2 H2O + H(+)</text>
        <dbReference type="Rhea" id="RHEA:75107"/>
        <dbReference type="Rhea" id="RHEA-COMP:11964"/>
        <dbReference type="Rhea" id="RHEA-COMP:11965"/>
        <dbReference type="ChEBI" id="CHEBI:15377"/>
        <dbReference type="ChEBI" id="CHEBI:15378"/>
        <dbReference type="ChEBI" id="CHEBI:15379"/>
        <dbReference type="ChEBI" id="CHEBI:57618"/>
        <dbReference type="ChEBI" id="CHEBI:58210"/>
        <dbReference type="ChEBI" id="CHEBI:166681"/>
        <dbReference type="ChEBI" id="CHEBI:166806"/>
    </reaction>
    <physiologicalReaction direction="left-to-right" evidence="3">
        <dbReference type="Rhea" id="RHEA:75108"/>
    </physiologicalReaction>
</comment>
<comment type="catalytic activity">
    <reaction evidence="3">
        <text>32-oxolanosterol + reduced [NADPH--hemoprotein reductase] + O2 = 4,4-dimethyl-5alpha-cholesta-8,14,24-trien-3beta-ol + formate + oxidized [NADPH--hemoprotein reductase] + H2O + 2 H(+)</text>
        <dbReference type="Rhea" id="RHEA:75111"/>
        <dbReference type="Rhea" id="RHEA-COMP:11964"/>
        <dbReference type="Rhea" id="RHEA-COMP:11965"/>
        <dbReference type="ChEBI" id="CHEBI:15377"/>
        <dbReference type="ChEBI" id="CHEBI:15378"/>
        <dbReference type="ChEBI" id="CHEBI:15379"/>
        <dbReference type="ChEBI" id="CHEBI:15740"/>
        <dbReference type="ChEBI" id="CHEBI:17813"/>
        <dbReference type="ChEBI" id="CHEBI:57618"/>
        <dbReference type="ChEBI" id="CHEBI:58210"/>
        <dbReference type="ChEBI" id="CHEBI:166681"/>
    </reaction>
    <physiologicalReaction direction="left-to-right" evidence="3">
        <dbReference type="Rhea" id="RHEA:75112"/>
    </physiologicalReaction>
</comment>
<comment type="catalytic activity">
    <reaction evidence="2">
        <text>eburicol + 3 reduced [NADPH--hemoprotein reductase] + 3 O2 = 14-demethyleburicol + formate + 3 oxidized [NADPH--hemoprotein reductase] + 4 H2O + 4 H(+)</text>
        <dbReference type="Rhea" id="RHEA:75439"/>
        <dbReference type="Rhea" id="RHEA-COMP:11964"/>
        <dbReference type="Rhea" id="RHEA-COMP:11965"/>
        <dbReference type="ChEBI" id="CHEBI:15377"/>
        <dbReference type="ChEBI" id="CHEBI:15378"/>
        <dbReference type="ChEBI" id="CHEBI:15379"/>
        <dbReference type="ChEBI" id="CHEBI:15740"/>
        <dbReference type="ChEBI" id="CHEBI:57618"/>
        <dbReference type="ChEBI" id="CHEBI:58210"/>
        <dbReference type="ChEBI" id="CHEBI:70315"/>
        <dbReference type="ChEBI" id="CHEBI:194330"/>
    </reaction>
    <physiologicalReaction direction="left-to-right" evidence="2">
        <dbReference type="Rhea" id="RHEA:75440"/>
    </physiologicalReaction>
</comment>
<comment type="catalytic activity">
    <reaction evidence="3">
        <text>eburicol + reduced [NADPH--hemoprotein reductase] + O2 = 32-hydroxyeburicol + oxidized [NADPH--hemoprotein reductase] + H2O + H(+)</text>
        <dbReference type="Rhea" id="RHEA:75427"/>
        <dbReference type="Rhea" id="RHEA-COMP:11964"/>
        <dbReference type="Rhea" id="RHEA-COMP:11965"/>
        <dbReference type="ChEBI" id="CHEBI:15377"/>
        <dbReference type="ChEBI" id="CHEBI:15378"/>
        <dbReference type="ChEBI" id="CHEBI:15379"/>
        <dbReference type="ChEBI" id="CHEBI:57618"/>
        <dbReference type="ChEBI" id="CHEBI:58210"/>
        <dbReference type="ChEBI" id="CHEBI:70315"/>
        <dbReference type="ChEBI" id="CHEBI:194328"/>
    </reaction>
    <physiologicalReaction direction="left-to-right" evidence="3">
        <dbReference type="Rhea" id="RHEA:75428"/>
    </physiologicalReaction>
</comment>
<comment type="catalytic activity">
    <reaction evidence="3">
        <text>32-hydroxyeburicol + reduced [NADPH--hemoprotein reductase] + O2 = 32-oxoeburicol + oxidized [NADPH--hemoprotein reductase] + 2 H2O + H(+)</text>
        <dbReference type="Rhea" id="RHEA:75431"/>
        <dbReference type="Rhea" id="RHEA-COMP:11964"/>
        <dbReference type="Rhea" id="RHEA-COMP:11965"/>
        <dbReference type="ChEBI" id="CHEBI:15377"/>
        <dbReference type="ChEBI" id="CHEBI:15378"/>
        <dbReference type="ChEBI" id="CHEBI:15379"/>
        <dbReference type="ChEBI" id="CHEBI:57618"/>
        <dbReference type="ChEBI" id="CHEBI:58210"/>
        <dbReference type="ChEBI" id="CHEBI:194328"/>
        <dbReference type="ChEBI" id="CHEBI:194329"/>
    </reaction>
    <physiologicalReaction direction="left-to-right" evidence="3">
        <dbReference type="Rhea" id="RHEA:75432"/>
    </physiologicalReaction>
</comment>
<comment type="catalytic activity">
    <reaction evidence="3">
        <text>32-oxoeburicol + reduced [NADPH--hemoprotein reductase] + O2 = 14-demethyleburicol + formate + oxidized [NADPH--hemoprotein reductase] + H2O + 2 H(+)</text>
        <dbReference type="Rhea" id="RHEA:75435"/>
        <dbReference type="Rhea" id="RHEA-COMP:11964"/>
        <dbReference type="Rhea" id="RHEA-COMP:11965"/>
        <dbReference type="ChEBI" id="CHEBI:15377"/>
        <dbReference type="ChEBI" id="CHEBI:15378"/>
        <dbReference type="ChEBI" id="CHEBI:15379"/>
        <dbReference type="ChEBI" id="CHEBI:15740"/>
        <dbReference type="ChEBI" id="CHEBI:57618"/>
        <dbReference type="ChEBI" id="CHEBI:58210"/>
        <dbReference type="ChEBI" id="CHEBI:194329"/>
        <dbReference type="ChEBI" id="CHEBI:194330"/>
    </reaction>
    <physiologicalReaction direction="left-to-right" evidence="3">
        <dbReference type="Rhea" id="RHEA:75436"/>
    </physiologicalReaction>
</comment>
<comment type="cofactor">
    <cofactor evidence="1">
        <name>heme</name>
        <dbReference type="ChEBI" id="CHEBI:30413"/>
    </cofactor>
</comment>
<comment type="pathway">
    <text>Steroid biosynthesis; zymosterol biosynthesis; zymosterol from lanosterol: step 1/6.</text>
</comment>
<comment type="subcellular location">
    <subcellularLocation>
        <location evidence="5">Membrane</location>
    </subcellularLocation>
</comment>
<comment type="similarity">
    <text evidence="5">Belongs to the cytochrome P450 family.</text>
</comment>
<keyword id="KW-0349">Heme</keyword>
<keyword id="KW-0408">Iron</keyword>
<keyword id="KW-0444">Lipid biosynthesis</keyword>
<keyword id="KW-0443">Lipid metabolism</keyword>
<keyword id="KW-0472">Membrane</keyword>
<keyword id="KW-0479">Metal-binding</keyword>
<keyword id="KW-0503">Monooxygenase</keyword>
<keyword id="KW-0560">Oxidoreductase</keyword>
<keyword id="KW-0752">Steroid biosynthesis</keyword>
<keyword id="KW-0753">Steroid metabolism</keyword>
<keyword id="KW-0756">Sterol biosynthesis</keyword>
<keyword id="KW-1207">Sterol metabolism</keyword>
<organism>
    <name type="scientific">Candida tropicalis</name>
    <name type="common">Yeast</name>
    <dbReference type="NCBI Taxonomy" id="5482"/>
    <lineage>
        <taxon>Eukaryota</taxon>
        <taxon>Fungi</taxon>
        <taxon>Dikarya</taxon>
        <taxon>Ascomycota</taxon>
        <taxon>Saccharomycotina</taxon>
        <taxon>Pichiomycetes</taxon>
        <taxon>Debaryomycetaceae</taxon>
        <taxon>Candida/Lodderomyces clade</taxon>
        <taxon>Candida</taxon>
    </lineage>
</organism>
<name>CP51_CANTR</name>
<evidence type="ECO:0000250" key="1"/>
<evidence type="ECO:0000250" key="2">
    <source>
        <dbReference type="UniProtKB" id="P10613"/>
    </source>
</evidence>
<evidence type="ECO:0000250" key="3">
    <source>
        <dbReference type="UniProtKB" id="P10614"/>
    </source>
</evidence>
<evidence type="ECO:0000250" key="4">
    <source>
        <dbReference type="UniProtKB" id="Q4WNT5"/>
    </source>
</evidence>
<evidence type="ECO:0000305" key="5"/>
<accession>P14263</accession>
<gene>
    <name type="primary">ERG11</name>
    <name type="synonym">CYP51</name>
</gene>
<dbReference type="EC" id="1.14.14.154"/>
<dbReference type="EMBL" id="M23673">
    <property type="protein sequence ID" value="AAA53284.1"/>
    <property type="molecule type" value="Genomic_DNA"/>
</dbReference>
<dbReference type="EMBL" id="M17595">
    <property type="protein sequence ID" value="AAA34316.1"/>
    <property type="molecule type" value="Genomic_DNA"/>
</dbReference>
<dbReference type="PIR" id="A31854">
    <property type="entry name" value="A31854"/>
</dbReference>
<dbReference type="SMR" id="P14263"/>
<dbReference type="DrugBank" id="DB01167">
    <property type="generic name" value="Itraconazole"/>
</dbReference>
<dbReference type="EnsemblFungi" id="CTRG_05283-t43_1">
    <property type="protein sequence ID" value="CTRG_05283-t43_1-p1"/>
    <property type="gene ID" value="CTRG_05283"/>
</dbReference>
<dbReference type="VEuPathDB" id="FungiDB:CTMYA2_056970"/>
<dbReference type="VEuPathDB" id="FungiDB:CTRG_05283"/>
<dbReference type="UniPathway" id="UPA00770">
    <property type="reaction ID" value="UER00754"/>
</dbReference>
<dbReference type="GO" id="GO:0032541">
    <property type="term" value="C:cortical endoplasmic reticulum"/>
    <property type="evidence" value="ECO:0007669"/>
    <property type="project" value="EnsemblFungi"/>
</dbReference>
<dbReference type="GO" id="GO:0016020">
    <property type="term" value="C:membrane"/>
    <property type="evidence" value="ECO:0007669"/>
    <property type="project" value="UniProtKB-SubCell"/>
</dbReference>
<dbReference type="GO" id="GO:0097038">
    <property type="term" value="C:perinuclear endoplasmic reticulum"/>
    <property type="evidence" value="ECO:0007669"/>
    <property type="project" value="EnsemblFungi"/>
</dbReference>
<dbReference type="GO" id="GO:0020037">
    <property type="term" value="F:heme binding"/>
    <property type="evidence" value="ECO:0007669"/>
    <property type="project" value="InterPro"/>
</dbReference>
<dbReference type="GO" id="GO:0005506">
    <property type="term" value="F:iron ion binding"/>
    <property type="evidence" value="ECO:0007669"/>
    <property type="project" value="InterPro"/>
</dbReference>
<dbReference type="GO" id="GO:0008398">
    <property type="term" value="F:sterol 14-demethylase activity"/>
    <property type="evidence" value="ECO:0007669"/>
    <property type="project" value="UniProtKB-EC"/>
</dbReference>
<dbReference type="GO" id="GO:0006696">
    <property type="term" value="P:ergosterol biosynthetic process"/>
    <property type="evidence" value="ECO:0007669"/>
    <property type="project" value="EnsemblFungi"/>
</dbReference>
<dbReference type="CDD" id="cd11042">
    <property type="entry name" value="CYP51-like"/>
    <property type="match status" value="1"/>
</dbReference>
<dbReference type="FunFam" id="1.10.630.10:FF:000033">
    <property type="entry name" value="14-alpha sterol demethylase"/>
    <property type="match status" value="1"/>
</dbReference>
<dbReference type="Gene3D" id="1.10.630.10">
    <property type="entry name" value="Cytochrome P450"/>
    <property type="match status" value="1"/>
</dbReference>
<dbReference type="InterPro" id="IPR050529">
    <property type="entry name" value="CYP450_sterol_14alpha_dmase"/>
</dbReference>
<dbReference type="InterPro" id="IPR001128">
    <property type="entry name" value="Cyt_P450"/>
</dbReference>
<dbReference type="InterPro" id="IPR017972">
    <property type="entry name" value="Cyt_P450_CS"/>
</dbReference>
<dbReference type="InterPro" id="IPR002403">
    <property type="entry name" value="Cyt_P450_E_grp-IV"/>
</dbReference>
<dbReference type="InterPro" id="IPR036396">
    <property type="entry name" value="Cyt_P450_sf"/>
</dbReference>
<dbReference type="PANTHER" id="PTHR24304:SF2">
    <property type="entry name" value="24-HYDROXYCHOLESTEROL 7-ALPHA-HYDROXYLASE"/>
    <property type="match status" value="1"/>
</dbReference>
<dbReference type="PANTHER" id="PTHR24304">
    <property type="entry name" value="CYTOCHROME P450 FAMILY 7"/>
    <property type="match status" value="1"/>
</dbReference>
<dbReference type="Pfam" id="PF00067">
    <property type="entry name" value="p450"/>
    <property type="match status" value="1"/>
</dbReference>
<dbReference type="PRINTS" id="PR00465">
    <property type="entry name" value="EP450IV"/>
</dbReference>
<dbReference type="PRINTS" id="PR00385">
    <property type="entry name" value="P450"/>
</dbReference>
<dbReference type="SUPFAM" id="SSF48264">
    <property type="entry name" value="Cytochrome P450"/>
    <property type="match status" value="1"/>
</dbReference>
<dbReference type="PROSITE" id="PS00086">
    <property type="entry name" value="CYTOCHROME_P450"/>
    <property type="match status" value="1"/>
</dbReference>
<sequence>MAIVDTAIDGINYFLSLSLTQQITILVVFPFIYNIAWQLLYSLRKDRVPMVFYWIPWFGSAASYGMQPYEFFEKCRLKYGDVFSFMLLGKVMTVYLGPKGHEFIYNAKLSDVSAEEAYTHLTTPVFGKGVIYDCPNSRLMEQKKFAKFALTTDSFKTYVPKIREEVLNYFVNDVSFKTKERDHGVASVMKTQPEITIFTASRCLFGDEMRKSFDRSFAQLYADLDKGFTPINFVFPNLPLPHYWRRDAAQRKISAHYMKEIKRRRESGDIDPKRDLIDSLLVNSTYKDGVKMTDQEIANLLIGVLMGGQHTSASTSAWFLLHLAEQPQLQDDLYEELTNLLKEKGGDLNDLTYEDLQKLPLVNNTIKETLRMHMPLHSIFRKVMNPLRVPNTKYVIPKGHYVLVSAGYAHTSDRWFEHPEHFNPRRWESDDTKASAVSFNSEDTVDYGFGKISKGVSSPYLPFGGGRHRCIGEQFAYVQLGTILTTYIYNFKWRLNGDKVPDVDYQSMVTLPLEPAEIVWEKRDTCMV</sequence>
<reference key="1">
    <citation type="journal article" date="1988" name="DNA">
        <title>Primary structure of the cytochrome P450 lanosterol 14 alpha-demethylase gene from Candida tropicalis.</title>
        <authorList>
            <person name="Chen C."/>
            <person name="Kalb V.F."/>
            <person name="Turi T.G."/>
            <person name="Loper J.C."/>
        </authorList>
    </citation>
    <scope>NUCLEOTIDE SEQUENCE [GENOMIC DNA]</scope>
    <source>
        <strain>ATCC 750 / CBS 94 / DSM 11953 / JCM 1541 / NBRC 1400</strain>
    </source>
</reference>
<reference key="2">
    <citation type="journal article" date="1987" name="Biochem. Biophys. Res. Commun.">
        <title>Isolation of the Candida tropicalis gene for P450 lanosterol demethylase and its expression in Saccharomyces cerevisiae.</title>
        <authorList>
            <person name="Chen C."/>
            <person name="Turi T.G."/>
            <person name="Sanglard D."/>
            <person name="Loper J.C."/>
        </authorList>
    </citation>
    <scope>NUCLEOTIDE SEQUENCE [GENOMIC DNA] OF 434-528</scope>
    <source>
        <strain>ATCC 750 / CBS 94 / DSM 11953 / JCM 1541 / NBRC 1400</strain>
    </source>
</reference>
<feature type="chain" id="PRO_0000052005" description="Lanosterol 14-alpha demethylase">
    <location>
        <begin position="1"/>
        <end position="528"/>
    </location>
</feature>
<feature type="binding site" description="axial binding residue">
    <location>
        <position position="470"/>
    </location>
    <ligand>
        <name>heme</name>
        <dbReference type="ChEBI" id="CHEBI:30413"/>
    </ligand>
    <ligandPart>
        <name>Fe</name>
        <dbReference type="ChEBI" id="CHEBI:18248"/>
    </ligandPart>
</feature>
<feature type="sequence conflict" description="In Ref. 2; AAA34316." evidence="5" ref="2">
    <original>G</original>
    <variation>V</variation>
    <location>
        <position position="448"/>
    </location>
</feature>
<feature type="sequence conflict" description="In Ref. 2; AAA34316." evidence="5" ref="2">
    <original>V</original>
    <variation>G</variation>
    <location>
        <position position="500"/>
    </location>
</feature>